<sequence>MRIWAVLASFLVFFYIPQSYAGVALGATRVIYPEGQKQVQLAVTNNDDKSSYLIQSWIENAEGKKDARFVITPPLFSMQGKKENTLRIIDATNGQMPEDRESLFWVNVKAIPAMDKAKTGENYLQFAIVSRIKLLYRPQGLVIPPEQAPGKLEFTRENGGLTLFNPTPYYLTVTDLKAGNKSLENTMVPPQGKVTVNIPGGYTGGDITYKTINDYGALTEQVKGVVK</sequence>
<keyword id="KW-0002">3D-structure</keyword>
<keyword id="KW-0143">Chaperone</keyword>
<keyword id="KW-1029">Fimbrium biogenesis</keyword>
<keyword id="KW-0393">Immunoglobulin domain</keyword>
<keyword id="KW-0574">Periplasm</keyword>
<keyword id="KW-0732">Signal</keyword>
<feature type="signal peptide" evidence="2">
    <location>
        <begin position="1"/>
        <end position="21"/>
    </location>
</feature>
<feature type="chain" id="PRO_0000009277" description="Chaperone protein FocC">
    <location>
        <begin position="22"/>
        <end position="227"/>
    </location>
</feature>
<feature type="strand" evidence="4">
    <location>
        <begin position="23"/>
        <end position="26"/>
    </location>
</feature>
<feature type="strand" evidence="4">
    <location>
        <begin position="28"/>
        <end position="33"/>
    </location>
</feature>
<feature type="strand" evidence="4">
    <location>
        <begin position="37"/>
        <end position="45"/>
    </location>
</feature>
<feature type="strand" evidence="4">
    <location>
        <begin position="51"/>
        <end position="60"/>
    </location>
</feature>
<feature type="strand" evidence="4">
    <location>
        <begin position="67"/>
        <end position="90"/>
    </location>
</feature>
<feature type="strand" evidence="4">
    <location>
        <begin position="98"/>
        <end position="100"/>
    </location>
</feature>
<feature type="strand" evidence="4">
    <location>
        <begin position="102"/>
        <end position="112"/>
    </location>
</feature>
<feature type="strand" evidence="4">
    <location>
        <begin position="127"/>
        <end position="137"/>
    </location>
</feature>
<feature type="helix" evidence="4">
    <location>
        <begin position="145"/>
        <end position="147"/>
    </location>
</feature>
<feature type="helix" evidence="4">
    <location>
        <begin position="149"/>
        <end position="151"/>
    </location>
</feature>
<feature type="strand" evidence="4">
    <location>
        <begin position="153"/>
        <end position="155"/>
    </location>
</feature>
<feature type="strand" evidence="4">
    <location>
        <begin position="162"/>
        <end position="164"/>
    </location>
</feature>
<feature type="strand" evidence="4">
    <location>
        <begin position="167"/>
        <end position="169"/>
    </location>
</feature>
<feature type="strand" evidence="4">
    <location>
        <begin position="171"/>
        <end position="178"/>
    </location>
</feature>
<feature type="strand" evidence="4">
    <location>
        <begin position="186"/>
        <end position="188"/>
    </location>
</feature>
<feature type="strand" evidence="4">
    <location>
        <begin position="193"/>
        <end position="195"/>
    </location>
</feature>
<feature type="strand" evidence="4">
    <location>
        <begin position="207"/>
        <end position="212"/>
    </location>
</feature>
<feature type="strand" evidence="4">
    <location>
        <begin position="222"/>
        <end position="224"/>
    </location>
</feature>
<comment type="function">
    <text>Involved in the biogenesis of the F1C fimbriae.</text>
</comment>
<comment type="subcellular location">
    <subcellularLocation>
        <location evidence="1">Periplasm</location>
    </subcellularLocation>
</comment>
<comment type="similarity">
    <text evidence="3">Belongs to the periplasmic pilus chaperone family.</text>
</comment>
<name>FOCC_ECOLX</name>
<accession>P62609</accession>
<accession>P46008</accession>
<evidence type="ECO:0000250" key="1"/>
<evidence type="ECO:0000255" key="2"/>
<evidence type="ECO:0000305" key="3"/>
<evidence type="ECO:0007829" key="4">
    <source>
        <dbReference type="PDB" id="1L4I"/>
    </source>
</evidence>
<proteinExistence type="evidence at protein level"/>
<reference key="1">
    <citation type="journal article" date="1995" name="J. Bacteriol.">
        <title>The export systems of type 1 and F1C fimbriae are interchangeable but work in parental pairs.</title>
        <authorList>
            <person name="Klemm P."/>
            <person name="Joergensen B.J."/>
            <person name="Kreft B."/>
            <person name="Christiansen G."/>
        </authorList>
    </citation>
    <scope>NUCLEOTIDE SEQUENCE [GENOMIC DNA]</scope>
    <source>
        <strain>AD110 / UPEC</strain>
    </source>
</reference>
<protein>
    <recommendedName>
        <fullName>Chaperone protein FocC</fullName>
    </recommendedName>
</protein>
<dbReference type="EMBL" id="Z46635">
    <property type="protein sequence ID" value="CAA86604.1"/>
    <property type="molecule type" value="Genomic_DNA"/>
</dbReference>
<dbReference type="PIR" id="I41062">
    <property type="entry name" value="I41062"/>
</dbReference>
<dbReference type="PDB" id="1L4I">
    <property type="method" value="X-ray"/>
    <property type="resolution" value="2.20 A"/>
    <property type="chains" value="A/B=22-227"/>
</dbReference>
<dbReference type="PDBsum" id="1L4I"/>
<dbReference type="SMR" id="P62609"/>
<dbReference type="EvolutionaryTrace" id="P62609"/>
<dbReference type="GO" id="GO:0030288">
    <property type="term" value="C:outer membrane-bounded periplasmic space"/>
    <property type="evidence" value="ECO:0007669"/>
    <property type="project" value="InterPro"/>
</dbReference>
<dbReference type="GO" id="GO:0071555">
    <property type="term" value="P:cell wall organization"/>
    <property type="evidence" value="ECO:0007669"/>
    <property type="project" value="InterPro"/>
</dbReference>
<dbReference type="GO" id="GO:0061077">
    <property type="term" value="P:chaperone-mediated protein folding"/>
    <property type="evidence" value="ECO:0007669"/>
    <property type="project" value="InterPro"/>
</dbReference>
<dbReference type="FunFam" id="2.60.40.10:FF:000458">
    <property type="entry name" value="Molecular chaperone FimC"/>
    <property type="match status" value="1"/>
</dbReference>
<dbReference type="Gene3D" id="2.60.40.10">
    <property type="entry name" value="Immunoglobulins"/>
    <property type="match status" value="2"/>
</dbReference>
<dbReference type="InterPro" id="IPR013783">
    <property type="entry name" value="Ig-like_fold"/>
</dbReference>
<dbReference type="InterPro" id="IPR008962">
    <property type="entry name" value="PapD-like_sf"/>
</dbReference>
<dbReference type="InterPro" id="IPR050643">
    <property type="entry name" value="Periplasmic_pilus_chap"/>
</dbReference>
<dbReference type="InterPro" id="IPR036316">
    <property type="entry name" value="Pili_assmbl_chap_C_dom_sf"/>
</dbReference>
<dbReference type="InterPro" id="IPR001829">
    <property type="entry name" value="Pili_assmbl_chaperone_bac"/>
</dbReference>
<dbReference type="InterPro" id="IPR016148">
    <property type="entry name" value="Pili_assmbl_chaperone_C"/>
</dbReference>
<dbReference type="InterPro" id="IPR018046">
    <property type="entry name" value="Pili_assmbl_chaperone_CS"/>
</dbReference>
<dbReference type="InterPro" id="IPR016147">
    <property type="entry name" value="Pili_assmbl_chaperone_N"/>
</dbReference>
<dbReference type="PANTHER" id="PTHR30251:SF11">
    <property type="entry name" value="CHAPERONE PROTEIN FIMC-RELATED"/>
    <property type="match status" value="1"/>
</dbReference>
<dbReference type="PANTHER" id="PTHR30251">
    <property type="entry name" value="PILUS ASSEMBLY CHAPERONE"/>
    <property type="match status" value="1"/>
</dbReference>
<dbReference type="Pfam" id="PF02753">
    <property type="entry name" value="PapD_C"/>
    <property type="match status" value="1"/>
</dbReference>
<dbReference type="Pfam" id="PF00345">
    <property type="entry name" value="PapD_N"/>
    <property type="match status" value="1"/>
</dbReference>
<dbReference type="PRINTS" id="PR00969">
    <property type="entry name" value="CHAPERONPILI"/>
</dbReference>
<dbReference type="SUPFAM" id="SSF49354">
    <property type="entry name" value="PapD-like"/>
    <property type="match status" value="1"/>
</dbReference>
<dbReference type="SUPFAM" id="SSF49584">
    <property type="entry name" value="Periplasmic chaperone C-domain"/>
    <property type="match status" value="1"/>
</dbReference>
<dbReference type="PROSITE" id="PS00635">
    <property type="entry name" value="PILI_CHAPERONE"/>
    <property type="match status" value="1"/>
</dbReference>
<gene>
    <name type="primary">focC</name>
</gene>
<organism>
    <name type="scientific">Escherichia coli</name>
    <dbReference type="NCBI Taxonomy" id="562"/>
    <lineage>
        <taxon>Bacteria</taxon>
        <taxon>Pseudomonadati</taxon>
        <taxon>Pseudomonadota</taxon>
        <taxon>Gammaproteobacteria</taxon>
        <taxon>Enterobacterales</taxon>
        <taxon>Enterobacteriaceae</taxon>
        <taxon>Escherichia</taxon>
    </lineage>
</organism>